<feature type="chain" id="PRO_1000082236" description="Succinate--CoA ligase [ADP-forming] subunit beta">
    <location>
        <begin position="1"/>
        <end position="398"/>
    </location>
</feature>
<feature type="domain" description="ATP-grasp" evidence="1">
    <location>
        <begin position="9"/>
        <end position="254"/>
    </location>
</feature>
<feature type="binding site" evidence="1">
    <location>
        <position position="46"/>
    </location>
    <ligand>
        <name>ATP</name>
        <dbReference type="ChEBI" id="CHEBI:30616"/>
    </ligand>
</feature>
<feature type="binding site" evidence="1">
    <location>
        <begin position="53"/>
        <end position="55"/>
    </location>
    <ligand>
        <name>ATP</name>
        <dbReference type="ChEBI" id="CHEBI:30616"/>
    </ligand>
</feature>
<feature type="binding site" evidence="1">
    <location>
        <position position="109"/>
    </location>
    <ligand>
        <name>ATP</name>
        <dbReference type="ChEBI" id="CHEBI:30616"/>
    </ligand>
</feature>
<feature type="binding site" evidence="1">
    <location>
        <position position="112"/>
    </location>
    <ligand>
        <name>ATP</name>
        <dbReference type="ChEBI" id="CHEBI:30616"/>
    </ligand>
</feature>
<feature type="binding site" evidence="1">
    <location>
        <position position="117"/>
    </location>
    <ligand>
        <name>ATP</name>
        <dbReference type="ChEBI" id="CHEBI:30616"/>
    </ligand>
</feature>
<feature type="binding site" evidence="1">
    <location>
        <position position="209"/>
    </location>
    <ligand>
        <name>Mg(2+)</name>
        <dbReference type="ChEBI" id="CHEBI:18420"/>
    </ligand>
</feature>
<feature type="binding site" evidence="1">
    <location>
        <position position="223"/>
    </location>
    <ligand>
        <name>Mg(2+)</name>
        <dbReference type="ChEBI" id="CHEBI:18420"/>
    </ligand>
</feature>
<feature type="binding site" evidence="1">
    <location>
        <position position="274"/>
    </location>
    <ligand>
        <name>substrate</name>
        <note>ligand shared with subunit alpha</note>
    </ligand>
</feature>
<feature type="binding site" evidence="1">
    <location>
        <begin position="331"/>
        <end position="333"/>
    </location>
    <ligand>
        <name>substrate</name>
        <note>ligand shared with subunit alpha</note>
    </ligand>
</feature>
<dbReference type="EC" id="6.2.1.5" evidence="1"/>
<dbReference type="EMBL" id="CP000738">
    <property type="protein sequence ID" value="ABR61772.1"/>
    <property type="molecule type" value="Genomic_DNA"/>
</dbReference>
<dbReference type="RefSeq" id="WP_012067154.1">
    <property type="nucleotide sequence ID" value="NC_009636.1"/>
</dbReference>
<dbReference type="RefSeq" id="YP_001328607.1">
    <property type="nucleotide sequence ID" value="NC_009636.1"/>
</dbReference>
<dbReference type="SMR" id="A6UDP2"/>
<dbReference type="STRING" id="366394.Smed_2943"/>
<dbReference type="GeneID" id="61610530"/>
<dbReference type="KEGG" id="smd:Smed_2943"/>
<dbReference type="PATRIC" id="fig|366394.8.peg.6165"/>
<dbReference type="eggNOG" id="COG0045">
    <property type="taxonomic scope" value="Bacteria"/>
</dbReference>
<dbReference type="HOGENOM" id="CLU_037430_0_2_5"/>
<dbReference type="OrthoDB" id="9802602at2"/>
<dbReference type="UniPathway" id="UPA00223">
    <property type="reaction ID" value="UER00999"/>
</dbReference>
<dbReference type="Proteomes" id="UP000001108">
    <property type="component" value="Chromosome"/>
</dbReference>
<dbReference type="GO" id="GO:0005829">
    <property type="term" value="C:cytosol"/>
    <property type="evidence" value="ECO:0007669"/>
    <property type="project" value="TreeGrafter"/>
</dbReference>
<dbReference type="GO" id="GO:0042709">
    <property type="term" value="C:succinate-CoA ligase complex"/>
    <property type="evidence" value="ECO:0007669"/>
    <property type="project" value="TreeGrafter"/>
</dbReference>
<dbReference type="GO" id="GO:0005524">
    <property type="term" value="F:ATP binding"/>
    <property type="evidence" value="ECO:0007669"/>
    <property type="project" value="UniProtKB-UniRule"/>
</dbReference>
<dbReference type="GO" id="GO:0000287">
    <property type="term" value="F:magnesium ion binding"/>
    <property type="evidence" value="ECO:0007669"/>
    <property type="project" value="UniProtKB-UniRule"/>
</dbReference>
<dbReference type="GO" id="GO:0004775">
    <property type="term" value="F:succinate-CoA ligase (ADP-forming) activity"/>
    <property type="evidence" value="ECO:0007669"/>
    <property type="project" value="UniProtKB-UniRule"/>
</dbReference>
<dbReference type="GO" id="GO:0004776">
    <property type="term" value="F:succinate-CoA ligase (GDP-forming) activity"/>
    <property type="evidence" value="ECO:0007669"/>
    <property type="project" value="RHEA"/>
</dbReference>
<dbReference type="GO" id="GO:0006104">
    <property type="term" value="P:succinyl-CoA metabolic process"/>
    <property type="evidence" value="ECO:0007669"/>
    <property type="project" value="TreeGrafter"/>
</dbReference>
<dbReference type="GO" id="GO:0006099">
    <property type="term" value="P:tricarboxylic acid cycle"/>
    <property type="evidence" value="ECO:0007669"/>
    <property type="project" value="UniProtKB-UniRule"/>
</dbReference>
<dbReference type="FunFam" id="3.30.1490.20:FF:000002">
    <property type="entry name" value="Succinate--CoA ligase [ADP-forming] subunit beta"/>
    <property type="match status" value="1"/>
</dbReference>
<dbReference type="FunFam" id="3.30.470.20:FF:000002">
    <property type="entry name" value="Succinate--CoA ligase [ADP-forming] subunit beta"/>
    <property type="match status" value="1"/>
</dbReference>
<dbReference type="FunFam" id="3.40.50.261:FF:000001">
    <property type="entry name" value="Succinate--CoA ligase [ADP-forming] subunit beta"/>
    <property type="match status" value="1"/>
</dbReference>
<dbReference type="Gene3D" id="3.30.1490.20">
    <property type="entry name" value="ATP-grasp fold, A domain"/>
    <property type="match status" value="1"/>
</dbReference>
<dbReference type="Gene3D" id="3.30.470.20">
    <property type="entry name" value="ATP-grasp fold, B domain"/>
    <property type="match status" value="1"/>
</dbReference>
<dbReference type="Gene3D" id="3.40.50.261">
    <property type="entry name" value="Succinyl-CoA synthetase domains"/>
    <property type="match status" value="1"/>
</dbReference>
<dbReference type="HAMAP" id="MF_00558">
    <property type="entry name" value="Succ_CoA_beta"/>
    <property type="match status" value="1"/>
</dbReference>
<dbReference type="InterPro" id="IPR011761">
    <property type="entry name" value="ATP-grasp"/>
</dbReference>
<dbReference type="InterPro" id="IPR013650">
    <property type="entry name" value="ATP-grasp_succ-CoA_synth-type"/>
</dbReference>
<dbReference type="InterPro" id="IPR013815">
    <property type="entry name" value="ATP_grasp_subdomain_1"/>
</dbReference>
<dbReference type="InterPro" id="IPR017866">
    <property type="entry name" value="Succ-CoA_synthase_bsu_CS"/>
</dbReference>
<dbReference type="InterPro" id="IPR005811">
    <property type="entry name" value="SUCC_ACL_C"/>
</dbReference>
<dbReference type="InterPro" id="IPR005809">
    <property type="entry name" value="Succ_CoA_ligase-like_bsu"/>
</dbReference>
<dbReference type="InterPro" id="IPR016102">
    <property type="entry name" value="Succinyl-CoA_synth-like"/>
</dbReference>
<dbReference type="NCBIfam" id="NF001913">
    <property type="entry name" value="PRK00696.1"/>
    <property type="match status" value="1"/>
</dbReference>
<dbReference type="NCBIfam" id="TIGR01016">
    <property type="entry name" value="sucCoAbeta"/>
    <property type="match status" value="1"/>
</dbReference>
<dbReference type="PANTHER" id="PTHR11815:SF10">
    <property type="entry name" value="SUCCINATE--COA LIGASE [GDP-FORMING] SUBUNIT BETA, MITOCHONDRIAL"/>
    <property type="match status" value="1"/>
</dbReference>
<dbReference type="PANTHER" id="PTHR11815">
    <property type="entry name" value="SUCCINYL-COA SYNTHETASE BETA CHAIN"/>
    <property type="match status" value="1"/>
</dbReference>
<dbReference type="Pfam" id="PF08442">
    <property type="entry name" value="ATP-grasp_2"/>
    <property type="match status" value="1"/>
</dbReference>
<dbReference type="Pfam" id="PF00549">
    <property type="entry name" value="Ligase_CoA"/>
    <property type="match status" value="1"/>
</dbReference>
<dbReference type="PIRSF" id="PIRSF001554">
    <property type="entry name" value="SucCS_beta"/>
    <property type="match status" value="1"/>
</dbReference>
<dbReference type="SUPFAM" id="SSF56059">
    <property type="entry name" value="Glutathione synthetase ATP-binding domain-like"/>
    <property type="match status" value="1"/>
</dbReference>
<dbReference type="SUPFAM" id="SSF52210">
    <property type="entry name" value="Succinyl-CoA synthetase domains"/>
    <property type="match status" value="1"/>
</dbReference>
<dbReference type="PROSITE" id="PS50975">
    <property type="entry name" value="ATP_GRASP"/>
    <property type="match status" value="1"/>
</dbReference>
<dbReference type="PROSITE" id="PS01217">
    <property type="entry name" value="SUCCINYL_COA_LIG_3"/>
    <property type="match status" value="1"/>
</dbReference>
<protein>
    <recommendedName>
        <fullName evidence="1">Succinate--CoA ligase [ADP-forming] subunit beta</fullName>
        <ecNumber evidence="1">6.2.1.5</ecNumber>
    </recommendedName>
    <alternativeName>
        <fullName evidence="1">Succinyl-CoA synthetase subunit beta</fullName>
        <shortName evidence="1">SCS-beta</shortName>
    </alternativeName>
</protein>
<organism>
    <name type="scientific">Sinorhizobium medicae (strain WSM419)</name>
    <name type="common">Ensifer medicae</name>
    <dbReference type="NCBI Taxonomy" id="366394"/>
    <lineage>
        <taxon>Bacteria</taxon>
        <taxon>Pseudomonadati</taxon>
        <taxon>Pseudomonadota</taxon>
        <taxon>Alphaproteobacteria</taxon>
        <taxon>Hyphomicrobiales</taxon>
        <taxon>Rhizobiaceae</taxon>
        <taxon>Sinorhizobium/Ensifer group</taxon>
        <taxon>Sinorhizobium</taxon>
    </lineage>
</organism>
<comment type="function">
    <text evidence="1">Succinyl-CoA synthetase functions in the citric acid cycle (TCA), coupling the hydrolysis of succinyl-CoA to the synthesis of either ATP or GTP and thus represents the only step of substrate-level phosphorylation in the TCA. The beta subunit provides nucleotide specificity of the enzyme and binds the substrate succinate, while the binding sites for coenzyme A and phosphate are found in the alpha subunit.</text>
</comment>
<comment type="catalytic activity">
    <reaction evidence="1">
        <text>succinate + ATP + CoA = succinyl-CoA + ADP + phosphate</text>
        <dbReference type="Rhea" id="RHEA:17661"/>
        <dbReference type="ChEBI" id="CHEBI:30031"/>
        <dbReference type="ChEBI" id="CHEBI:30616"/>
        <dbReference type="ChEBI" id="CHEBI:43474"/>
        <dbReference type="ChEBI" id="CHEBI:57287"/>
        <dbReference type="ChEBI" id="CHEBI:57292"/>
        <dbReference type="ChEBI" id="CHEBI:456216"/>
        <dbReference type="EC" id="6.2.1.5"/>
    </reaction>
    <physiologicalReaction direction="right-to-left" evidence="1">
        <dbReference type="Rhea" id="RHEA:17663"/>
    </physiologicalReaction>
</comment>
<comment type="catalytic activity">
    <reaction evidence="1">
        <text>GTP + succinate + CoA = succinyl-CoA + GDP + phosphate</text>
        <dbReference type="Rhea" id="RHEA:22120"/>
        <dbReference type="ChEBI" id="CHEBI:30031"/>
        <dbReference type="ChEBI" id="CHEBI:37565"/>
        <dbReference type="ChEBI" id="CHEBI:43474"/>
        <dbReference type="ChEBI" id="CHEBI:57287"/>
        <dbReference type="ChEBI" id="CHEBI:57292"/>
        <dbReference type="ChEBI" id="CHEBI:58189"/>
    </reaction>
    <physiologicalReaction direction="right-to-left" evidence="1">
        <dbReference type="Rhea" id="RHEA:22122"/>
    </physiologicalReaction>
</comment>
<comment type="cofactor">
    <cofactor evidence="1">
        <name>Mg(2+)</name>
        <dbReference type="ChEBI" id="CHEBI:18420"/>
    </cofactor>
    <text evidence="1">Binds 1 Mg(2+) ion per subunit.</text>
</comment>
<comment type="pathway">
    <text evidence="1">Carbohydrate metabolism; tricarboxylic acid cycle; succinate from succinyl-CoA (ligase route): step 1/1.</text>
</comment>
<comment type="subunit">
    <text evidence="1">Heterotetramer of two alpha and two beta subunits.</text>
</comment>
<comment type="similarity">
    <text evidence="1">Belongs to the succinate/malate CoA ligase beta subunit family.</text>
</comment>
<keyword id="KW-0067">ATP-binding</keyword>
<keyword id="KW-0436">Ligase</keyword>
<keyword id="KW-0460">Magnesium</keyword>
<keyword id="KW-0479">Metal-binding</keyword>
<keyword id="KW-0547">Nucleotide-binding</keyword>
<keyword id="KW-0816">Tricarboxylic acid cycle</keyword>
<accession>A6UDP2</accession>
<evidence type="ECO:0000255" key="1">
    <source>
        <dbReference type="HAMAP-Rule" id="MF_00558"/>
    </source>
</evidence>
<name>SUCC_SINMW</name>
<sequence length="398" mass="42120">MNIHEYQAKALLKSYGAPVAEGVAIFSADEAAAAAKKLPGPLYVVKSQIHAGGRGKGKFKELGADAKGGVRLAKSADEVVAHAREMLGNTLVTKQTGPSGKQVNRLYIEDGADIDRELYLSILVDRSVGQVAFVVSTEGGMDIEAVAEHTPEKIVTVAIDPDKGVTADDLKTLTEALKLDGEARADAEKLFPILYKAFVEKDMSLLEVNPLIVMTNGRMRVLDAKVSFDGNALFRHEDVVALRDTTEEDEKEIEASKYDLAYVALDGNIGCMVNGAGLAMATMDIIKLYGAEPANFLDVGGGASKEKVTQAFKIITADPAVKGILVNIFGGIMKCDVIAEGVIAAVKEVGLKVPLVVRLEGTNVELGKKIINESGLNVISADDLDDAAQKIVAAVKGA</sequence>
<reference key="1">
    <citation type="submission" date="2007-06" db="EMBL/GenBank/DDBJ databases">
        <title>Complete sequence of Sinorhizobium medicae WSM419 chromosome.</title>
        <authorList>
            <consortium name="US DOE Joint Genome Institute"/>
            <person name="Copeland A."/>
            <person name="Lucas S."/>
            <person name="Lapidus A."/>
            <person name="Barry K."/>
            <person name="Glavina del Rio T."/>
            <person name="Dalin E."/>
            <person name="Tice H."/>
            <person name="Pitluck S."/>
            <person name="Chain P."/>
            <person name="Malfatti S."/>
            <person name="Shin M."/>
            <person name="Vergez L."/>
            <person name="Schmutz J."/>
            <person name="Larimer F."/>
            <person name="Land M."/>
            <person name="Hauser L."/>
            <person name="Kyrpides N."/>
            <person name="Mikhailova N."/>
            <person name="Reeve W.G."/>
            <person name="Richardson P."/>
        </authorList>
    </citation>
    <scope>NUCLEOTIDE SEQUENCE [LARGE SCALE GENOMIC DNA]</scope>
    <source>
        <strain>WSM419</strain>
    </source>
</reference>
<gene>
    <name evidence="1" type="primary">sucC</name>
    <name type="ordered locus">Smed_2943</name>
</gene>
<proteinExistence type="inferred from homology"/>